<keyword id="KW-0010">Activator</keyword>
<keyword id="KW-0067">ATP-binding</keyword>
<keyword id="KW-0238">DNA-binding</keyword>
<keyword id="KW-0347">Helicase</keyword>
<keyword id="KW-0378">Hydrolase</keyword>
<keyword id="KW-0547">Nucleotide-binding</keyword>
<keyword id="KW-1185">Reference proteome</keyword>
<keyword id="KW-0804">Transcription</keyword>
<keyword id="KW-0805">Transcription regulation</keyword>
<keyword id="KW-0946">Virion</keyword>
<organism>
    <name type="scientific">Melanoplus sanguinipes entomopoxvirus</name>
    <name type="common">MsEPV</name>
    <dbReference type="NCBI Taxonomy" id="83191"/>
    <lineage>
        <taxon>Viruses</taxon>
        <taxon>Varidnaviria</taxon>
        <taxon>Bamfordvirae</taxon>
        <taxon>Nucleocytoviricota</taxon>
        <taxon>Pokkesviricetes</taxon>
        <taxon>Chitovirales</taxon>
        <taxon>Poxviridae</taxon>
        <taxon>Entomopoxvirinae</taxon>
        <taxon>Deltaentomopoxvirus</taxon>
    </lineage>
</organism>
<organismHost>
    <name type="scientific">Melanoplus sanguinipes</name>
    <name type="common">Migratory grasshopper</name>
    <dbReference type="NCBI Taxonomy" id="65742"/>
</organismHost>
<gene>
    <name type="primary">VETFS</name>
    <name type="ordered locus">MSV113</name>
</gene>
<sequence length="674" mass="78088">MNKIILEDLKESNVPLYIPQILPHQLATLDFLNERSLKEKKSVLLFHKMGSGKTIISLLFSIIASIETKILIILPNTSIMDIWISKLYDSLLLLNKNDKYNLNNIEFTTRSRLNEELLGTNKNINDIITENIKKYDNYIIIIDEAHNFFGNASGELLIHIKQNSTARYVLLTGSPISNTIESLKDIVELLTNETFEYNKYIESAGNKVFQQRINKQGIELLKNKLTGLISYYDEDRKDIPSPIFQGNIKLLNYPVVLCPMSKLQEDNYNMISNQTENDMFIKLMMNVSLVALGDKENYTNFDLLMASNKQIFPNFYVSNGKFIGQELIDLNISSKLKYFMNSILTSPNAGKRFIYFANSTIGSTIIRSVMIANGISEYDKEIVNNFVCVNCLKERNCNNKECIPMKFVIITSKESNKGNNSYINKILSVFNEDVNENGSVIMFLFGSRIIAEAYTLKDIKEIWFLTVPETKSELEQCIARAIRSFAYKDKNTRVVVRICLATTPNALSNEISQIIEKYKDESLSDEEKTLLLNKFEMKLVNYAIDLPYDLRKQLYSEFKSEKAKVAYNIFINLSILTNNILNDNILKCFIIEKIRRYSYENSRYKLKDILSYIKKNLKFDYKNKIEDYVNEFVNDGVVVYNKSFGTCYIDWFKDDIVVKQIILEFNNYLLSYNY</sequence>
<accession>Q9YVX9</accession>
<feature type="chain" id="PRO_0000099075" description="Early transcription factor 70 kDa subunit">
    <location>
        <begin position="1"/>
        <end position="674"/>
    </location>
</feature>
<feature type="domain" description="Helicase ATP-binding" evidence="2">
    <location>
        <begin position="34"/>
        <end position="193"/>
    </location>
</feature>
<feature type="short sequence motif" description="DEXH box">
    <location>
        <begin position="135"/>
        <end position="138"/>
    </location>
</feature>
<feature type="binding site" evidence="2">
    <location>
        <begin position="45"/>
        <end position="52"/>
    </location>
    <ligand>
        <name>ATP</name>
        <dbReference type="ChEBI" id="CHEBI:30616"/>
    </ligand>
</feature>
<name>ETF1_MSEPV</name>
<protein>
    <recommendedName>
        <fullName>Early transcription factor 70 kDa subunit</fullName>
        <ecNumber>3.6.4.-</ecNumber>
    </recommendedName>
    <alternativeName>
        <fullName>ATP-dependent helicase VETFS</fullName>
    </alternativeName>
    <alternativeName>
        <fullName>ETF small subunit</fullName>
    </alternativeName>
</protein>
<proteinExistence type="inferred from homology"/>
<dbReference type="EC" id="3.6.4.-"/>
<dbReference type="EMBL" id="AF063866">
    <property type="protein sequence ID" value="AAC97658.1"/>
    <property type="molecule type" value="Genomic_DNA"/>
</dbReference>
<dbReference type="PIR" id="T28274">
    <property type="entry name" value="T28274"/>
</dbReference>
<dbReference type="RefSeq" id="NP_048184.1">
    <property type="nucleotide sequence ID" value="NC_001993.1"/>
</dbReference>
<dbReference type="SMR" id="Q9YVX9"/>
<dbReference type="GeneID" id="1449921"/>
<dbReference type="KEGG" id="vg:1449921"/>
<dbReference type="OrthoDB" id="1135at10239"/>
<dbReference type="Proteomes" id="UP000172353">
    <property type="component" value="Segment"/>
</dbReference>
<dbReference type="GO" id="GO:0044423">
    <property type="term" value="C:virion component"/>
    <property type="evidence" value="ECO:0007669"/>
    <property type="project" value="UniProtKB-KW"/>
</dbReference>
<dbReference type="GO" id="GO:0005524">
    <property type="term" value="F:ATP binding"/>
    <property type="evidence" value="ECO:0007669"/>
    <property type="project" value="UniProtKB-KW"/>
</dbReference>
<dbReference type="GO" id="GO:0003677">
    <property type="term" value="F:DNA binding"/>
    <property type="evidence" value="ECO:0007669"/>
    <property type="project" value="UniProtKB-KW"/>
</dbReference>
<dbReference type="GO" id="GO:0004386">
    <property type="term" value="F:helicase activity"/>
    <property type="evidence" value="ECO:0007669"/>
    <property type="project" value="UniProtKB-KW"/>
</dbReference>
<dbReference type="GO" id="GO:0016787">
    <property type="term" value="F:hydrolase activity"/>
    <property type="evidence" value="ECO:0007669"/>
    <property type="project" value="UniProtKB-KW"/>
</dbReference>
<dbReference type="Gene3D" id="3.40.50.300">
    <property type="entry name" value="P-loop containing nucleotide triphosphate hydrolases"/>
    <property type="match status" value="1"/>
</dbReference>
<dbReference type="InterPro" id="IPR014001">
    <property type="entry name" value="Helicase_ATP-bd"/>
</dbReference>
<dbReference type="InterPro" id="IPR027417">
    <property type="entry name" value="P-loop_NTPase"/>
</dbReference>
<dbReference type="InterPro" id="IPR000330">
    <property type="entry name" value="SNF2_N"/>
</dbReference>
<dbReference type="InterPro" id="IPR050496">
    <property type="entry name" value="SNF2_RAD54_helicase_repair"/>
</dbReference>
<dbReference type="PANTHER" id="PTHR45629:SF7">
    <property type="entry name" value="DNA EXCISION REPAIR PROTEIN ERCC-6-RELATED"/>
    <property type="match status" value="1"/>
</dbReference>
<dbReference type="PANTHER" id="PTHR45629">
    <property type="entry name" value="SNF2/RAD54 FAMILY MEMBER"/>
    <property type="match status" value="1"/>
</dbReference>
<dbReference type="Pfam" id="PF00176">
    <property type="entry name" value="SNF2-rel_dom"/>
    <property type="match status" value="1"/>
</dbReference>
<dbReference type="SMART" id="SM00487">
    <property type="entry name" value="DEXDc"/>
    <property type="match status" value="1"/>
</dbReference>
<dbReference type="SUPFAM" id="SSF52540">
    <property type="entry name" value="P-loop containing nucleoside triphosphate hydrolases"/>
    <property type="match status" value="2"/>
</dbReference>
<dbReference type="PROSITE" id="PS51192">
    <property type="entry name" value="HELICASE_ATP_BIND_1"/>
    <property type="match status" value="1"/>
</dbReference>
<comment type="function">
    <text evidence="1">Acts with RNA polymerase to initiate transcription from early gene promoters. Is recruited by the RPO-associated protein of 94 kDa (RAP94) to form the early transcription complex, which also contains the core RNA polymerase. ETF heterodimer binds to early gene promoters (By similarity).</text>
</comment>
<comment type="subunit">
    <text evidence="1">Heterodimer of a 70 kDa and a 82 kDa subunit. Part of the early transcription complex composed of ETF, RAP94, and the DNA-directed RNA polymerase (By similarity).</text>
</comment>
<comment type="subcellular location">
    <subcellularLocation>
        <location evidence="3">Virion</location>
    </subcellularLocation>
    <text>All the enzymes and other proteins required to synthesize early mRNAs are packaged within the virion core along with the DNA genome. This is necessary because viral early mRNAs are synthesized within minutes after virus entry into the cell and are extruded through pores in the core particle.</text>
</comment>
<comment type="similarity">
    <text evidence="3">Belongs to the helicase family. VETF subfamily.</text>
</comment>
<reference key="1">
    <citation type="journal article" date="1999" name="J. Virol.">
        <title>The genome of Melanoplus sanguinipes entomopoxvirus.</title>
        <authorList>
            <person name="Afonso C.L."/>
            <person name="Tulman E.R."/>
            <person name="Lu Z."/>
            <person name="Oma E."/>
            <person name="Kutish G.F."/>
            <person name="Rock D.L."/>
        </authorList>
    </citation>
    <scope>NUCLEOTIDE SEQUENCE [LARGE SCALE GENOMIC DNA]</scope>
    <source>
        <strain>Isolate Tucson</strain>
    </source>
</reference>
<evidence type="ECO:0000250" key="1"/>
<evidence type="ECO:0000255" key="2">
    <source>
        <dbReference type="PROSITE-ProRule" id="PRU00541"/>
    </source>
</evidence>
<evidence type="ECO:0000305" key="3"/>